<name>RAB34_HUMAN</name>
<protein>
    <recommendedName>
        <fullName>Ras-related protein Rab-34</fullName>
        <ecNumber evidence="1">3.6.5.2</ecNumber>
    </recommendedName>
    <alternativeName>
        <fullName>Ras-related protein Rab-39</fullName>
    </alternativeName>
    <alternativeName>
        <fullName>Ras-related protein Rah</fullName>
    </alternativeName>
</protein>
<organism>
    <name type="scientific">Homo sapiens</name>
    <name type="common">Human</name>
    <dbReference type="NCBI Taxonomy" id="9606"/>
    <lineage>
        <taxon>Eukaryota</taxon>
        <taxon>Metazoa</taxon>
        <taxon>Chordata</taxon>
        <taxon>Craniata</taxon>
        <taxon>Vertebrata</taxon>
        <taxon>Euteleostomi</taxon>
        <taxon>Mammalia</taxon>
        <taxon>Eutheria</taxon>
        <taxon>Euarchontoglires</taxon>
        <taxon>Primates</taxon>
        <taxon>Haplorrhini</taxon>
        <taxon>Catarrhini</taxon>
        <taxon>Hominidae</taxon>
        <taxon>Homo</taxon>
    </lineage>
</organism>
<comment type="function">
    <text evidence="1 2 5 6 8">The small GTPases Rab are key regulators of intracellular membrane trafficking, from the formation of transport vesicles to their fusion with membranes. Rabs cycle between an inactive GDP-bound form and an active GTP-bound form that is able to recruit to membranes different sets of downstream effectors directly responsible for vesicle formation, movement, tethering and fusion (By similarity). RAB34 transports protein involved in the redistribution of lysosomes to the peri-Golgi region (PubMed:27113757). Plays a role in the maturation of phagosomes that engulf pathogens, such as S.aureus and M.tuberculosis (PubMed:21255211). Plays a role in the fusion of phagosomes with lysosomes (PubMed:21255211). Involved in ciliogenesis (PubMed:37384395). In particular, it is required for early steps of the intracellular cilium assembly pathway initiated by trafficking and docking of ciliary vesicles to the centrioles in the cytoplasm, followed by axoneme formation in the cytoplasm. After axoneme elongation, the centrioles migrate close to the cell surface so that ciliary vesicles can fuse with the plasma membrane to expose cilia to the extracellular space (By similarity). It seems dispensable for ciliogenesis via the extracellular pathway where cilium assembly begins after migration and docking of the centriole to the plasma membrane (By similarity). Also acts as a positive regulator of hedgehog signaling and regulates ciliary function (By similarity).</text>
</comment>
<comment type="catalytic activity">
    <reaction evidence="1">
        <text>GTP + H2O = GDP + phosphate + H(+)</text>
        <dbReference type="Rhea" id="RHEA:19669"/>
        <dbReference type="ChEBI" id="CHEBI:15377"/>
        <dbReference type="ChEBI" id="CHEBI:15378"/>
        <dbReference type="ChEBI" id="CHEBI:37565"/>
        <dbReference type="ChEBI" id="CHEBI:43474"/>
        <dbReference type="ChEBI" id="CHEBI:58189"/>
        <dbReference type="EC" id="3.6.5.2"/>
    </reaction>
    <physiologicalReaction direction="left-to-right" evidence="1">
        <dbReference type="Rhea" id="RHEA:19670"/>
    </physiologicalReaction>
</comment>
<comment type="cofactor">
    <cofactor evidence="1">
        <name>Mg(2+)</name>
        <dbReference type="ChEBI" id="CHEBI:18420"/>
    </cofactor>
</comment>
<comment type="activity regulation">
    <text evidence="13">Regulated by guanine nucleotide exchange factors (GEFs) which promote the exchange of bound GDP for free GTP. Regulated by GTPase activating proteins (GAPs) which increase the GTP hydrolysis activity (Probable). Inhibited by GDP dissociation inhibitors (GDIs) (Probable).</text>
</comment>
<comment type="subunit">
    <text evidence="4 6 7">Interacts with RILP. The GTP-bound form interacts with REP15 (PubMed:35871249).</text>
</comment>
<comment type="interaction">
    <interactant intactId="EBI-2856739">
        <id>Q9BZG1</id>
    </interactant>
    <interactant intactId="EBI-718700">
        <id>P35219</id>
        <label>CA8</label>
    </interactant>
    <organismsDiffer>false</organismsDiffer>
    <experiments>3</experiments>
</comment>
<comment type="subcellular location">
    <subcellularLocation>
        <location evidence="2">Cytoplasm</location>
    </subcellularLocation>
    <subcellularLocation>
        <location evidence="2">Golgi apparatus</location>
    </subcellularLocation>
    <subcellularLocation>
        <location evidence="5">Cytoplasmic vesicle</location>
        <location evidence="5">Phagosome</location>
    </subcellularLocation>
    <subcellularLocation>
        <location evidence="5">Cytoplasmic vesicle</location>
        <location evidence="5">Phagosome membrane</location>
        <topology evidence="5">Lipid-anchor</topology>
        <orientation evidence="5">Cytoplasmic side</orientation>
    </subcellularLocation>
    <subcellularLocation>
        <location evidence="2">Cell projection</location>
        <location evidence="2">Cilium</location>
    </subcellularLocation>
    <subcellularLocation>
        <location evidence="2">Cytoplasm</location>
        <location evidence="2">Cytoskeleton</location>
        <location evidence="2">Microtubule organizing center</location>
        <location evidence="2">Centrosome</location>
    </subcellularLocation>
    <subcellularLocation>
        <location evidence="8">Cytoplasm</location>
        <location evidence="8">Cytoskeleton</location>
        <location evidence="8">Microtubule organizing center</location>
        <location evidence="8">Centrosome</location>
        <location evidence="8">Centriole</location>
    </subcellularLocation>
    <text evidence="5">Recruited to phagosomes containing S.aureus or M.tuberculosis (PubMed:21255211).</text>
</comment>
<comment type="alternative products">
    <event type="alternative splicing"/>
    <isoform>
        <id>Q9BZG1-1</id>
        <name>1</name>
        <sequence type="displayed"/>
    </isoform>
    <isoform>
        <id>Q9BZG1-2</id>
        <name>2</name>
        <sequence type="described" ref="VSP_010142"/>
    </isoform>
    <isoform>
        <id>P0DI83-1</id>
        <name>NARR</name>
        <sequence type="external"/>
    </isoform>
    <isoform>
        <id>Q9BZG1-4</id>
        <name>4</name>
        <sequence type="described" ref="VSP_044734"/>
    </isoform>
</comment>
<comment type="domain">
    <text evidence="1">Switch 1, switch 2 and the interswitch regions are characteristic of Rab GTPases and mediate the interactions with Rab downstream effectors. The switch regions undergo conformational changes upon nucleotide binding which drives interaction with specific sets of effector proteins, with most effectors only binding to GTP-bound Rab.</text>
</comment>
<comment type="disease" evidence="8 9">
    <disease id="DI-06848">
        <name>Orofaciodigital syndrome 20</name>
        <acronym>OFD20</acronym>
        <description>A form of orofaciodigital syndrome, a group of heterogeneous disorders characterized by malformations of the oral cavity, face and digits, and associated phenotypic abnormalities that lead to the delineation of various subtypes. OFD20 is an autosomal recessive form characterized by bilateral oral clefting, polydactyly/syndactyly, cerebral malformations, cardiac defects, anorectal anomalies, and shortening of the long bones.</description>
        <dbReference type="MIM" id="620718"/>
    </disease>
    <text>The disease is caused by variants affecting the gene represented in this entry.</text>
</comment>
<comment type="similarity">
    <text evidence="13">Belongs to the small GTPase superfamily. Rab family.</text>
</comment>
<dbReference type="EC" id="3.6.5.2" evidence="1"/>
<dbReference type="EMBL" id="AF322067">
    <property type="protein sequence ID" value="AAK09397.1"/>
    <property type="molecule type" value="mRNA"/>
</dbReference>
<dbReference type="EMBL" id="AJ277106">
    <property type="protein sequence ID" value="CAC81760.1"/>
    <property type="molecule type" value="mRNA"/>
</dbReference>
<dbReference type="EMBL" id="BT006702">
    <property type="protein sequence ID" value="AAP35348.1"/>
    <property type="molecule type" value="mRNA"/>
</dbReference>
<dbReference type="EMBL" id="AK027312">
    <property type="protein sequence ID" value="BAB55034.1"/>
    <property type="molecule type" value="mRNA"/>
</dbReference>
<dbReference type="EMBL" id="AK074689">
    <property type="protein sequence ID" value="BAC11141.1"/>
    <property type="molecule type" value="mRNA"/>
</dbReference>
<dbReference type="EMBL" id="AK304633">
    <property type="protein sequence ID" value="BAG65412.1"/>
    <property type="molecule type" value="mRNA"/>
</dbReference>
<dbReference type="EMBL" id="AC010761">
    <property type="status" value="NOT_ANNOTATED_CDS"/>
    <property type="molecule type" value="Genomic_DNA"/>
</dbReference>
<dbReference type="EMBL" id="BC016841">
    <property type="protein sequence ID" value="AAH16841.1"/>
    <property type="molecule type" value="mRNA"/>
</dbReference>
<dbReference type="EMBL" id="BC091510">
    <property type="protein sequence ID" value="AAH91510.1"/>
    <property type="molecule type" value="mRNA"/>
</dbReference>
<dbReference type="CCDS" id="CCDS11240.1">
    <molecule id="Q9BZG1-1"/>
</dbReference>
<dbReference type="CCDS" id="CCDS45636.1">
    <molecule id="Q9BZG1-2"/>
</dbReference>
<dbReference type="CCDS" id="CCDS58536.1">
    <molecule id="Q9BZG1-4"/>
</dbReference>
<dbReference type="RefSeq" id="NP_001138414.1">
    <molecule id="Q9BZG1-2"/>
    <property type="nucleotide sequence ID" value="NM_001144942.2"/>
</dbReference>
<dbReference type="RefSeq" id="NP_001243205.1">
    <molecule id="Q9BZG1-4"/>
    <property type="nucleotide sequence ID" value="NM_001256276.2"/>
</dbReference>
<dbReference type="RefSeq" id="NP_001243206.1">
    <molecule id="Q9BZG1-1"/>
    <property type="nucleotide sequence ID" value="NM_001256277.2"/>
</dbReference>
<dbReference type="RefSeq" id="NP_001243207.1">
    <property type="nucleotide sequence ID" value="NM_001256278.1"/>
</dbReference>
<dbReference type="RefSeq" id="NP_114140.4">
    <molecule id="Q9BZG1-1"/>
    <property type="nucleotide sequence ID" value="NM_031934.5"/>
</dbReference>
<dbReference type="RefSeq" id="XP_024306752.1">
    <molecule id="Q9BZG1-1"/>
    <property type="nucleotide sequence ID" value="XM_024450984.2"/>
</dbReference>
<dbReference type="RefSeq" id="XP_047292837.1">
    <molecule id="Q9BZG1-1"/>
    <property type="nucleotide sequence ID" value="XM_047436881.1"/>
</dbReference>
<dbReference type="RefSeq" id="XP_047292840.1">
    <molecule id="Q9BZG1-2"/>
    <property type="nucleotide sequence ID" value="XM_047436884.1"/>
</dbReference>
<dbReference type="RefSeq" id="XP_047292841.1">
    <molecule id="Q9BZG1-2"/>
    <property type="nucleotide sequence ID" value="XM_047436885.1"/>
</dbReference>
<dbReference type="RefSeq" id="XP_047292842.1">
    <molecule id="Q9BZG1-4"/>
    <property type="nucleotide sequence ID" value="XM_047436886.1"/>
</dbReference>
<dbReference type="RefSeq" id="XP_054173455.1">
    <molecule id="Q9BZG1-1"/>
    <property type="nucleotide sequence ID" value="XM_054317480.1"/>
</dbReference>
<dbReference type="RefSeq" id="XP_054173456.1">
    <molecule id="Q9BZG1-1"/>
    <property type="nucleotide sequence ID" value="XM_054317481.1"/>
</dbReference>
<dbReference type="RefSeq" id="XP_054173459.1">
    <molecule id="Q9BZG1-2"/>
    <property type="nucleotide sequence ID" value="XM_054317484.1"/>
</dbReference>
<dbReference type="RefSeq" id="XP_054173460.1">
    <molecule id="Q9BZG1-2"/>
    <property type="nucleotide sequence ID" value="XM_054317485.1"/>
</dbReference>
<dbReference type="RefSeq" id="XP_054173461.1">
    <molecule id="Q9BZG1-4"/>
    <property type="nucleotide sequence ID" value="XM_054317486.1"/>
</dbReference>
<dbReference type="SMR" id="Q9BZG1"/>
<dbReference type="BioGRID" id="123784">
    <property type="interactions" value="76"/>
</dbReference>
<dbReference type="FunCoup" id="Q9BZG1">
    <property type="interactions" value="746"/>
</dbReference>
<dbReference type="IntAct" id="Q9BZG1">
    <property type="interactions" value="30"/>
</dbReference>
<dbReference type="MINT" id="Q9BZG1"/>
<dbReference type="STRING" id="9606.ENSP00000413156"/>
<dbReference type="GlyGen" id="Q9BZG1">
    <property type="glycosylation" value="1 site, 1 O-linked glycan (1 site)"/>
</dbReference>
<dbReference type="iPTMnet" id="Q9BZG1"/>
<dbReference type="PhosphoSitePlus" id="Q9BZG1"/>
<dbReference type="BioMuta" id="RAB34"/>
<dbReference type="DMDM" id="20139693"/>
<dbReference type="jPOST" id="Q9BZG1"/>
<dbReference type="MassIVE" id="Q9BZG1"/>
<dbReference type="PaxDb" id="9606-ENSP00000413156"/>
<dbReference type="PeptideAtlas" id="Q9BZG1"/>
<dbReference type="ProteomicsDB" id="19907"/>
<dbReference type="ProteomicsDB" id="79837">
    <molecule id="Q9BZG1-1"/>
</dbReference>
<dbReference type="ProteomicsDB" id="79838">
    <molecule id="Q9BZG1-2"/>
</dbReference>
<dbReference type="Pumba" id="Q9BZG1"/>
<dbReference type="Antibodypedia" id="14281">
    <property type="antibodies" value="121 antibodies from 26 providers"/>
</dbReference>
<dbReference type="DNASU" id="83871"/>
<dbReference type="Ensembl" id="ENST00000301043.10">
    <molecule id="Q9BZG1-1"/>
    <property type="protein sequence ID" value="ENSP00000301043.6"/>
    <property type="gene ID" value="ENSG00000109113.20"/>
</dbReference>
<dbReference type="Ensembl" id="ENST00000395245.9">
    <molecule id="Q9BZG1-1"/>
    <property type="protein sequence ID" value="ENSP00000378666.3"/>
    <property type="gene ID" value="ENSG00000109113.20"/>
</dbReference>
<dbReference type="Ensembl" id="ENST00000415040.6">
    <molecule id="Q9BZG1-4"/>
    <property type="protein sequence ID" value="ENSP00000410279.2"/>
    <property type="gene ID" value="ENSG00000109113.20"/>
</dbReference>
<dbReference type="Ensembl" id="ENST00000436730.7">
    <molecule id="Q9BZG1-1"/>
    <property type="protein sequence ID" value="ENSP00000404180.3"/>
    <property type="gene ID" value="ENSG00000109113.20"/>
</dbReference>
<dbReference type="Ensembl" id="ENST00000450529.5">
    <molecule id="Q9BZG1-2"/>
    <property type="protein sequence ID" value="ENSP00000391048.1"/>
    <property type="gene ID" value="ENSG00000109113.20"/>
</dbReference>
<dbReference type="GeneID" id="83871"/>
<dbReference type="KEGG" id="hsa:83871"/>
<dbReference type="MANE-Select" id="ENST00000395245.9">
    <property type="protein sequence ID" value="ENSP00000378666.3"/>
    <property type="RefSeq nucleotide sequence ID" value="NM_031934.6"/>
    <property type="RefSeq protein sequence ID" value="NP_114140.4"/>
</dbReference>
<dbReference type="UCSC" id="uc002hce.3">
    <molecule id="Q9BZG1-1"/>
    <property type="organism name" value="human"/>
</dbReference>
<dbReference type="AGR" id="HGNC:16519"/>
<dbReference type="CTD" id="83871"/>
<dbReference type="DisGeNET" id="83871"/>
<dbReference type="GeneCards" id="RAB34"/>
<dbReference type="HGNC" id="HGNC:16519">
    <property type="gene designation" value="RAB34"/>
</dbReference>
<dbReference type="HPA" id="ENSG00000109113">
    <property type="expression patterns" value="Low tissue specificity"/>
</dbReference>
<dbReference type="MalaCards" id="RAB34"/>
<dbReference type="MIM" id="610917">
    <property type="type" value="gene"/>
</dbReference>
<dbReference type="MIM" id="620718">
    <property type="type" value="phenotype"/>
</dbReference>
<dbReference type="neXtProt" id="NX_Q9BZG1"/>
<dbReference type="OpenTargets" id="ENSG00000109113"/>
<dbReference type="PharmGKB" id="PA34126"/>
<dbReference type="VEuPathDB" id="HostDB:ENSG00000109113"/>
<dbReference type="eggNOG" id="KOG0094">
    <property type="taxonomic scope" value="Eukaryota"/>
</dbReference>
<dbReference type="GeneTree" id="ENSGT00940000159645"/>
<dbReference type="InParanoid" id="Q9BZG1"/>
<dbReference type="OMA" id="DRMITKF"/>
<dbReference type="OrthoDB" id="413584at2759"/>
<dbReference type="PAN-GO" id="Q9BZG1">
    <property type="GO annotations" value="5 GO annotations based on evolutionary models"/>
</dbReference>
<dbReference type="PhylomeDB" id="Q9BZG1"/>
<dbReference type="PathwayCommons" id="Q9BZG1"/>
<dbReference type="Reactome" id="R-HSA-8873719">
    <property type="pathway name" value="RAB geranylgeranylation"/>
</dbReference>
<dbReference type="SignaLink" id="Q9BZG1"/>
<dbReference type="BioGRID-ORCS" id="83871">
    <property type="hits" value="28 hits in 1157 CRISPR screens"/>
</dbReference>
<dbReference type="ChiTaRS" id="RAB34">
    <property type="organism name" value="human"/>
</dbReference>
<dbReference type="GeneWiki" id="RAB34"/>
<dbReference type="GenomeRNAi" id="83871"/>
<dbReference type="Pharos" id="Q9BZG1">
    <property type="development level" value="Tbio"/>
</dbReference>
<dbReference type="Proteomes" id="UP000005640">
    <property type="component" value="Chromosome 17"/>
</dbReference>
<dbReference type="RNAct" id="Q9BZG1">
    <property type="molecule type" value="protein"/>
</dbReference>
<dbReference type="Bgee" id="ENSG00000109113">
    <property type="expression patterns" value="Expressed in descending thoracic aorta and 176 other cell types or tissues"/>
</dbReference>
<dbReference type="ExpressionAtlas" id="Q9BZG1">
    <property type="expression patterns" value="baseline and differential"/>
</dbReference>
<dbReference type="GO" id="GO:0005814">
    <property type="term" value="C:centriole"/>
    <property type="evidence" value="ECO:0000314"/>
    <property type="project" value="UniProtKB"/>
</dbReference>
<dbReference type="GO" id="GO:0005813">
    <property type="term" value="C:centrosome"/>
    <property type="evidence" value="ECO:0007669"/>
    <property type="project" value="UniProtKB-SubCell"/>
</dbReference>
<dbReference type="GO" id="GO:0005929">
    <property type="term" value="C:cilium"/>
    <property type="evidence" value="ECO:0007669"/>
    <property type="project" value="UniProtKB-SubCell"/>
</dbReference>
<dbReference type="GO" id="GO:0070062">
    <property type="term" value="C:extracellular exosome"/>
    <property type="evidence" value="ECO:0007005"/>
    <property type="project" value="UniProtKB"/>
</dbReference>
<dbReference type="GO" id="GO:0005794">
    <property type="term" value="C:Golgi apparatus"/>
    <property type="evidence" value="ECO:0000314"/>
    <property type="project" value="UniProtKB"/>
</dbReference>
<dbReference type="GO" id="GO:0031985">
    <property type="term" value="C:Golgi cisterna"/>
    <property type="evidence" value="ECO:0000314"/>
    <property type="project" value="UniProtKB"/>
</dbReference>
<dbReference type="GO" id="GO:0005795">
    <property type="term" value="C:Golgi stack"/>
    <property type="evidence" value="ECO:0000314"/>
    <property type="project" value="UniProtKB"/>
</dbReference>
<dbReference type="GO" id="GO:0048471">
    <property type="term" value="C:perinuclear region of cytoplasm"/>
    <property type="evidence" value="ECO:0000314"/>
    <property type="project" value="UniProtKB"/>
</dbReference>
<dbReference type="GO" id="GO:0045335">
    <property type="term" value="C:phagocytic vesicle"/>
    <property type="evidence" value="ECO:0000314"/>
    <property type="project" value="UniProtKB"/>
</dbReference>
<dbReference type="GO" id="GO:0030670">
    <property type="term" value="C:phagocytic vesicle membrane"/>
    <property type="evidence" value="ECO:0007669"/>
    <property type="project" value="UniProtKB-SubCell"/>
</dbReference>
<dbReference type="GO" id="GO:0031982">
    <property type="term" value="C:vesicle"/>
    <property type="evidence" value="ECO:0000314"/>
    <property type="project" value="UniProtKB"/>
</dbReference>
<dbReference type="GO" id="GO:0005525">
    <property type="term" value="F:GTP binding"/>
    <property type="evidence" value="ECO:0000318"/>
    <property type="project" value="GO_Central"/>
</dbReference>
<dbReference type="GO" id="GO:0030742">
    <property type="term" value="F:GTP-dependent protein binding"/>
    <property type="evidence" value="ECO:0000353"/>
    <property type="project" value="ParkinsonsUK-UCL"/>
</dbReference>
<dbReference type="GO" id="GO:0003924">
    <property type="term" value="F:GTPase activity"/>
    <property type="evidence" value="ECO:0000318"/>
    <property type="project" value="GO_Central"/>
</dbReference>
<dbReference type="GO" id="GO:0031267">
    <property type="term" value="F:small GTPase binding"/>
    <property type="evidence" value="ECO:0000353"/>
    <property type="project" value="UniProtKB"/>
</dbReference>
<dbReference type="GO" id="GO:0019882">
    <property type="term" value="P:antigen processing and presentation"/>
    <property type="evidence" value="ECO:0000315"/>
    <property type="project" value="UniProtKB"/>
</dbReference>
<dbReference type="GO" id="GO:0060271">
    <property type="term" value="P:cilium assembly"/>
    <property type="evidence" value="ECO:0000315"/>
    <property type="project" value="UniProtKB"/>
</dbReference>
<dbReference type="GO" id="GO:0061824">
    <property type="term" value="P:cytosolic ciliogenesis"/>
    <property type="evidence" value="ECO:0000250"/>
    <property type="project" value="UniProtKB"/>
</dbReference>
<dbReference type="GO" id="GO:0043001">
    <property type="term" value="P:Golgi to plasma membrane protein transport"/>
    <property type="evidence" value="ECO:0000314"/>
    <property type="project" value="UniProtKB"/>
</dbReference>
<dbReference type="GO" id="GO:0032418">
    <property type="term" value="P:lysosome localization"/>
    <property type="evidence" value="ECO:0000314"/>
    <property type="project" value="UniProtKB"/>
</dbReference>
<dbReference type="GO" id="GO:0090382">
    <property type="term" value="P:phagosome maturation"/>
    <property type="evidence" value="ECO:0000315"/>
    <property type="project" value="UniProtKB"/>
</dbReference>
<dbReference type="GO" id="GO:0090385">
    <property type="term" value="P:phagosome-lysosome fusion"/>
    <property type="evidence" value="ECO:0000315"/>
    <property type="project" value="UniProtKB"/>
</dbReference>
<dbReference type="GO" id="GO:0045880">
    <property type="term" value="P:positive regulation of smoothened signaling pathway"/>
    <property type="evidence" value="ECO:0000250"/>
    <property type="project" value="UniProtKB"/>
</dbReference>
<dbReference type="GO" id="GO:0072659">
    <property type="term" value="P:protein localization to plasma membrane"/>
    <property type="evidence" value="ECO:0000314"/>
    <property type="project" value="UniProtKB"/>
</dbReference>
<dbReference type="CDD" id="cd04108">
    <property type="entry name" value="Rab36_Rab34"/>
    <property type="match status" value="1"/>
</dbReference>
<dbReference type="FunFam" id="3.40.50.300:FF:000748">
    <property type="entry name" value="ras-related protein Rab-34 isoform X2"/>
    <property type="match status" value="1"/>
</dbReference>
<dbReference type="Gene3D" id="3.40.50.300">
    <property type="entry name" value="P-loop containing nucleotide triphosphate hydrolases"/>
    <property type="match status" value="1"/>
</dbReference>
<dbReference type="InterPro" id="IPR027417">
    <property type="entry name" value="P-loop_NTPase"/>
</dbReference>
<dbReference type="InterPro" id="IPR050227">
    <property type="entry name" value="Rab"/>
</dbReference>
<dbReference type="InterPro" id="IPR005225">
    <property type="entry name" value="Small_GTP-bd"/>
</dbReference>
<dbReference type="InterPro" id="IPR001806">
    <property type="entry name" value="Small_GTPase"/>
</dbReference>
<dbReference type="NCBIfam" id="TIGR00231">
    <property type="entry name" value="small_GTP"/>
    <property type="match status" value="1"/>
</dbReference>
<dbReference type="PANTHER" id="PTHR47977">
    <property type="entry name" value="RAS-RELATED PROTEIN RAB"/>
    <property type="match status" value="1"/>
</dbReference>
<dbReference type="Pfam" id="PF00071">
    <property type="entry name" value="Ras"/>
    <property type="match status" value="1"/>
</dbReference>
<dbReference type="PRINTS" id="PR00449">
    <property type="entry name" value="RASTRNSFRMNG"/>
</dbReference>
<dbReference type="SMART" id="SM00175">
    <property type="entry name" value="RAB"/>
    <property type="match status" value="1"/>
</dbReference>
<dbReference type="SMART" id="SM00176">
    <property type="entry name" value="RAN"/>
    <property type="match status" value="1"/>
</dbReference>
<dbReference type="SMART" id="SM00173">
    <property type="entry name" value="RAS"/>
    <property type="match status" value="1"/>
</dbReference>
<dbReference type="SMART" id="SM00174">
    <property type="entry name" value="RHO"/>
    <property type="match status" value="1"/>
</dbReference>
<dbReference type="SUPFAM" id="SSF52540">
    <property type="entry name" value="P-loop containing nucleoside triphosphate hydrolases"/>
    <property type="match status" value="1"/>
</dbReference>
<dbReference type="PROSITE" id="PS51419">
    <property type="entry name" value="RAB"/>
    <property type="match status" value="1"/>
</dbReference>
<gene>
    <name evidence="14" type="primary">RAB34</name>
    <name type="synonym">RAB39</name>
    <name type="synonym">RAH</name>
</gene>
<proteinExistence type="evidence at protein level"/>
<reference key="1">
    <citation type="submission" date="2000-11" db="EMBL/GenBank/DDBJ databases">
        <title>Human Rab39 coding region (cDNA).</title>
        <authorList>
            <person name="Hong W."/>
        </authorList>
    </citation>
    <scope>NUCLEOTIDE SEQUENCE [MRNA] (ISOFORM 1)</scope>
</reference>
<reference key="2">
    <citation type="submission" date="2000-03" db="EMBL/GenBank/DDBJ databases">
        <title>Full-length sequencing of 100 cDNA clones from human adult skeletal muscle.</title>
        <authorList>
            <person name="Stanchi F."/>
            <person name="Lanfranchi G."/>
        </authorList>
    </citation>
    <scope>NUCLEOTIDE SEQUENCE [MRNA] (ISOFORM 1)</scope>
    <source>
        <tissue>Skeletal muscle</tissue>
    </source>
</reference>
<reference key="3">
    <citation type="submission" date="2003-05" db="EMBL/GenBank/DDBJ databases">
        <title>Cloning of human full-length CDSs in BD Creator(TM) system donor vector.</title>
        <authorList>
            <person name="Kalnine N."/>
            <person name="Chen X."/>
            <person name="Rolfs A."/>
            <person name="Halleck A."/>
            <person name="Hines L."/>
            <person name="Eisenstein S."/>
            <person name="Koundinya M."/>
            <person name="Raphael J."/>
            <person name="Moreira D."/>
            <person name="Kelley T."/>
            <person name="LaBaer J."/>
            <person name="Lin Y."/>
            <person name="Phelan M."/>
            <person name="Farmer A."/>
        </authorList>
    </citation>
    <scope>NUCLEOTIDE SEQUENCE [LARGE SCALE MRNA] (ISOFORM 2)</scope>
</reference>
<reference key="4">
    <citation type="journal article" date="2004" name="Nat. Genet.">
        <title>Complete sequencing and characterization of 21,243 full-length human cDNAs.</title>
        <authorList>
            <person name="Ota T."/>
            <person name="Suzuki Y."/>
            <person name="Nishikawa T."/>
            <person name="Otsuki T."/>
            <person name="Sugiyama T."/>
            <person name="Irie R."/>
            <person name="Wakamatsu A."/>
            <person name="Hayashi K."/>
            <person name="Sato H."/>
            <person name="Nagai K."/>
            <person name="Kimura K."/>
            <person name="Makita H."/>
            <person name="Sekine M."/>
            <person name="Obayashi M."/>
            <person name="Nishi T."/>
            <person name="Shibahara T."/>
            <person name="Tanaka T."/>
            <person name="Ishii S."/>
            <person name="Yamamoto J."/>
            <person name="Saito K."/>
            <person name="Kawai Y."/>
            <person name="Isono Y."/>
            <person name="Nakamura Y."/>
            <person name="Nagahari K."/>
            <person name="Murakami K."/>
            <person name="Yasuda T."/>
            <person name="Iwayanagi T."/>
            <person name="Wagatsuma M."/>
            <person name="Shiratori A."/>
            <person name="Sudo H."/>
            <person name="Hosoiri T."/>
            <person name="Kaku Y."/>
            <person name="Kodaira H."/>
            <person name="Kondo H."/>
            <person name="Sugawara M."/>
            <person name="Takahashi M."/>
            <person name="Kanda K."/>
            <person name="Yokoi T."/>
            <person name="Furuya T."/>
            <person name="Kikkawa E."/>
            <person name="Omura Y."/>
            <person name="Abe K."/>
            <person name="Kamihara K."/>
            <person name="Katsuta N."/>
            <person name="Sato K."/>
            <person name="Tanikawa M."/>
            <person name="Yamazaki M."/>
            <person name="Ninomiya K."/>
            <person name="Ishibashi T."/>
            <person name="Yamashita H."/>
            <person name="Murakawa K."/>
            <person name="Fujimori K."/>
            <person name="Tanai H."/>
            <person name="Kimata M."/>
            <person name="Watanabe M."/>
            <person name="Hiraoka S."/>
            <person name="Chiba Y."/>
            <person name="Ishida S."/>
            <person name="Ono Y."/>
            <person name="Takiguchi S."/>
            <person name="Watanabe S."/>
            <person name="Yosida M."/>
            <person name="Hotuta T."/>
            <person name="Kusano J."/>
            <person name="Kanehori K."/>
            <person name="Takahashi-Fujii A."/>
            <person name="Hara H."/>
            <person name="Tanase T.-O."/>
            <person name="Nomura Y."/>
            <person name="Togiya S."/>
            <person name="Komai F."/>
            <person name="Hara R."/>
            <person name="Takeuchi K."/>
            <person name="Arita M."/>
            <person name="Imose N."/>
            <person name="Musashino K."/>
            <person name="Yuuki H."/>
            <person name="Oshima A."/>
            <person name="Sasaki N."/>
            <person name="Aotsuka S."/>
            <person name="Yoshikawa Y."/>
            <person name="Matsunawa H."/>
            <person name="Ichihara T."/>
            <person name="Shiohata N."/>
            <person name="Sano S."/>
            <person name="Moriya S."/>
            <person name="Momiyama H."/>
            <person name="Satoh N."/>
            <person name="Takami S."/>
            <person name="Terashima Y."/>
            <person name="Suzuki O."/>
            <person name="Nakagawa S."/>
            <person name="Senoh A."/>
            <person name="Mizoguchi H."/>
            <person name="Goto Y."/>
            <person name="Shimizu F."/>
            <person name="Wakebe H."/>
            <person name="Hishigaki H."/>
            <person name="Watanabe T."/>
            <person name="Sugiyama A."/>
            <person name="Takemoto M."/>
            <person name="Kawakami B."/>
            <person name="Yamazaki M."/>
            <person name="Watanabe K."/>
            <person name="Kumagai A."/>
            <person name="Itakura S."/>
            <person name="Fukuzumi Y."/>
            <person name="Fujimori Y."/>
            <person name="Komiyama M."/>
            <person name="Tashiro H."/>
            <person name="Tanigami A."/>
            <person name="Fujiwara T."/>
            <person name="Ono T."/>
            <person name="Yamada K."/>
            <person name="Fujii Y."/>
            <person name="Ozaki K."/>
            <person name="Hirao M."/>
            <person name="Ohmori Y."/>
            <person name="Kawabata A."/>
            <person name="Hikiji T."/>
            <person name="Kobatake N."/>
            <person name="Inagaki H."/>
            <person name="Ikema Y."/>
            <person name="Okamoto S."/>
            <person name="Okitani R."/>
            <person name="Kawakami T."/>
            <person name="Noguchi S."/>
            <person name="Itoh T."/>
            <person name="Shigeta K."/>
            <person name="Senba T."/>
            <person name="Matsumura K."/>
            <person name="Nakajima Y."/>
            <person name="Mizuno T."/>
            <person name="Morinaga M."/>
            <person name="Sasaki M."/>
            <person name="Togashi T."/>
            <person name="Oyama M."/>
            <person name="Hata H."/>
            <person name="Watanabe M."/>
            <person name="Komatsu T."/>
            <person name="Mizushima-Sugano J."/>
            <person name="Satoh T."/>
            <person name="Shirai Y."/>
            <person name="Takahashi Y."/>
            <person name="Nakagawa K."/>
            <person name="Okumura K."/>
            <person name="Nagase T."/>
            <person name="Nomura N."/>
            <person name="Kikuchi H."/>
            <person name="Masuho Y."/>
            <person name="Yamashita R."/>
            <person name="Nakai K."/>
            <person name="Yada T."/>
            <person name="Nakamura Y."/>
            <person name="Ohara O."/>
            <person name="Isogai T."/>
            <person name="Sugano S."/>
        </authorList>
    </citation>
    <scope>NUCLEOTIDE SEQUENCE [LARGE SCALE MRNA] (ISOFORMS 1 AND 4)</scope>
    <source>
        <tissue>Embryo</tissue>
        <tissue>Mammary gland</tissue>
        <tissue>Uterus</tissue>
    </source>
</reference>
<reference key="5">
    <citation type="journal article" date="2006" name="Nature">
        <title>DNA sequence of human chromosome 17 and analysis of rearrangement in the human lineage.</title>
        <authorList>
            <person name="Zody M.C."/>
            <person name="Garber M."/>
            <person name="Adams D.J."/>
            <person name="Sharpe T."/>
            <person name="Harrow J."/>
            <person name="Lupski J.R."/>
            <person name="Nicholson C."/>
            <person name="Searle S.M."/>
            <person name="Wilming L."/>
            <person name="Young S.K."/>
            <person name="Abouelleil A."/>
            <person name="Allen N.R."/>
            <person name="Bi W."/>
            <person name="Bloom T."/>
            <person name="Borowsky M.L."/>
            <person name="Bugalter B.E."/>
            <person name="Butler J."/>
            <person name="Chang J.L."/>
            <person name="Chen C.-K."/>
            <person name="Cook A."/>
            <person name="Corum B."/>
            <person name="Cuomo C.A."/>
            <person name="de Jong P.J."/>
            <person name="DeCaprio D."/>
            <person name="Dewar K."/>
            <person name="FitzGerald M."/>
            <person name="Gilbert J."/>
            <person name="Gibson R."/>
            <person name="Gnerre S."/>
            <person name="Goldstein S."/>
            <person name="Grafham D.V."/>
            <person name="Grocock R."/>
            <person name="Hafez N."/>
            <person name="Hagopian D.S."/>
            <person name="Hart E."/>
            <person name="Norman C.H."/>
            <person name="Humphray S."/>
            <person name="Jaffe D.B."/>
            <person name="Jones M."/>
            <person name="Kamal M."/>
            <person name="Khodiyar V.K."/>
            <person name="LaButti K."/>
            <person name="Laird G."/>
            <person name="Lehoczky J."/>
            <person name="Liu X."/>
            <person name="Lokyitsang T."/>
            <person name="Loveland J."/>
            <person name="Lui A."/>
            <person name="Macdonald P."/>
            <person name="Major J.E."/>
            <person name="Matthews L."/>
            <person name="Mauceli E."/>
            <person name="McCarroll S.A."/>
            <person name="Mihalev A.H."/>
            <person name="Mudge J."/>
            <person name="Nguyen C."/>
            <person name="Nicol R."/>
            <person name="O'Leary S.B."/>
            <person name="Osoegawa K."/>
            <person name="Schwartz D.C."/>
            <person name="Shaw-Smith C."/>
            <person name="Stankiewicz P."/>
            <person name="Steward C."/>
            <person name="Swarbreck D."/>
            <person name="Venkataraman V."/>
            <person name="Whittaker C.A."/>
            <person name="Yang X."/>
            <person name="Zimmer A.R."/>
            <person name="Bradley A."/>
            <person name="Hubbard T."/>
            <person name="Birren B.W."/>
            <person name="Rogers J."/>
            <person name="Lander E.S."/>
            <person name="Nusbaum C."/>
        </authorList>
    </citation>
    <scope>NUCLEOTIDE SEQUENCE [LARGE SCALE GENOMIC DNA]</scope>
</reference>
<reference key="6">
    <citation type="journal article" date="2004" name="Genome Res.">
        <title>The status, quality, and expansion of the NIH full-length cDNA project: the Mammalian Gene Collection (MGC).</title>
        <authorList>
            <consortium name="The MGC Project Team"/>
        </authorList>
    </citation>
    <scope>NUCLEOTIDE SEQUENCE [LARGE SCALE MRNA] (ISOFORMS 1 AND 2)</scope>
    <source>
        <tissue>Brain</tissue>
        <tissue>Pancreas</tissue>
    </source>
</reference>
<reference key="7">
    <citation type="journal article" date="2004" name="Mol. Biol. Cell">
        <title>A unique region of RILP distinguishes it from its related proteins in its regulation of lysosomal morphology and interaction with Rab7 and Rab34.</title>
        <authorList>
            <person name="Wang T."/>
            <person name="Wong K.K."/>
            <person name="Hong W."/>
        </authorList>
    </citation>
    <scope>INTERACTION WITH RILP</scope>
</reference>
<reference key="8">
    <citation type="journal article" date="2008" name="Proc. Natl. Acad. Sci. U.S.A.">
        <title>A quantitative atlas of mitotic phosphorylation.</title>
        <authorList>
            <person name="Dephoure N."/>
            <person name="Zhou C."/>
            <person name="Villen J."/>
            <person name="Beausoleil S.A."/>
            <person name="Bakalarski C.E."/>
            <person name="Elledge S.J."/>
            <person name="Gygi S.P."/>
        </authorList>
    </citation>
    <scope>PHOSPHORYLATION [LARGE SCALE ANALYSIS] AT SER-241</scope>
    <scope>IDENTIFICATION BY MASS SPECTROMETRY [LARGE SCALE ANALYSIS]</scope>
    <source>
        <tissue>Cervix carcinoma</tissue>
    </source>
</reference>
<reference key="9">
    <citation type="journal article" date="2011" name="BMC Syst. Biol.">
        <title>Initial characterization of the human central proteome.</title>
        <authorList>
            <person name="Burkard T.R."/>
            <person name="Planyavsky M."/>
            <person name="Kaupe I."/>
            <person name="Breitwieser F.P."/>
            <person name="Buerckstuemmer T."/>
            <person name="Bennett K.L."/>
            <person name="Superti-Furga G."/>
            <person name="Colinge J."/>
        </authorList>
    </citation>
    <scope>IDENTIFICATION BY MASS SPECTROMETRY [LARGE SCALE ANALYSIS]</scope>
</reference>
<reference key="10">
    <citation type="journal article" date="2011" name="Sci. Signal.">
        <title>System-wide temporal characterization of the proteome and phosphoproteome of human embryonic stem cell differentiation.</title>
        <authorList>
            <person name="Rigbolt K.T."/>
            <person name="Prokhorova T.A."/>
            <person name="Akimov V."/>
            <person name="Henningsen J."/>
            <person name="Johansen P.T."/>
            <person name="Kratchmarova I."/>
            <person name="Kassem M."/>
            <person name="Mann M."/>
            <person name="Olsen J.V."/>
            <person name="Blagoev B."/>
        </authorList>
    </citation>
    <scope>PHOSPHORYLATION [LARGE SCALE ANALYSIS] AT SER-241 AND SER-244</scope>
    <scope>IDENTIFICATION BY MASS SPECTROMETRY [LARGE SCALE ANALYSIS]</scope>
</reference>
<reference key="11">
    <citation type="journal article" date="2011" name="Traffic">
        <title>Rab GTPases regulating phagosome maturation are differentially recruited to mycobacterial phagosomes.</title>
        <authorList>
            <person name="Seto S."/>
            <person name="Tsujimura K."/>
            <person name="Koide Y."/>
        </authorList>
    </citation>
    <scope>FUNCTION</scope>
    <scope>SUBCELLULAR LOCATION</scope>
</reference>
<reference key="12">
    <citation type="journal article" date="2012" name="Mol. Cell. Proteomics">
        <title>Comparative large-scale characterisation of plant vs. mammal proteins reveals similar and idiosyncratic N-alpha acetylation features.</title>
        <authorList>
            <person name="Bienvenut W.V."/>
            <person name="Sumpton D."/>
            <person name="Martinez A."/>
            <person name="Lilla S."/>
            <person name="Espagne C."/>
            <person name="Meinnel T."/>
            <person name="Giglione C."/>
        </authorList>
    </citation>
    <scope>ACETYLATION [LARGE SCALE ANALYSIS] AT MET-1</scope>
    <scope>IDENTIFICATION BY MASS SPECTROMETRY [LARGE SCALE ANALYSIS]</scope>
</reference>
<reference key="13">
    <citation type="journal article" date="2012" name="Proc. Natl. Acad. Sci. U.S.A.">
        <title>N-terminal acetylome analyses and functional insights of the N-terminal acetyltransferase NatB.</title>
        <authorList>
            <person name="Van Damme P."/>
            <person name="Lasa M."/>
            <person name="Polevoda B."/>
            <person name="Gazquez C."/>
            <person name="Elosegui-Artola A."/>
            <person name="Kim D.S."/>
            <person name="De Juan-Pardo E."/>
            <person name="Demeyer K."/>
            <person name="Hole K."/>
            <person name="Larrea E."/>
            <person name="Timmerman E."/>
            <person name="Prieto J."/>
            <person name="Arnesen T."/>
            <person name="Sherman F."/>
            <person name="Gevaert K."/>
            <person name="Aldabe R."/>
        </authorList>
    </citation>
    <scope>ACETYLATION [LARGE SCALE ANALYSIS] AT MET-1</scope>
    <scope>IDENTIFICATION BY MASS SPECTROMETRY [LARGE SCALE ANALYSIS]</scope>
</reference>
<reference key="14">
    <citation type="journal article" date="2013" name="J. Proteome Res.">
        <title>Toward a comprehensive characterization of a human cancer cell phosphoproteome.</title>
        <authorList>
            <person name="Zhou H."/>
            <person name="Di Palma S."/>
            <person name="Preisinger C."/>
            <person name="Peng M."/>
            <person name="Polat A.N."/>
            <person name="Heck A.J."/>
            <person name="Mohammed S."/>
        </authorList>
    </citation>
    <scope>PHOSPHORYLATION [LARGE SCALE ANALYSIS] AT SER-244</scope>
    <scope>IDENTIFICATION BY MASS SPECTROMETRY [LARGE SCALE ANALYSIS]</scope>
    <source>
        <tissue>Cervix carcinoma</tissue>
    </source>
</reference>
<reference key="15">
    <citation type="journal article" date="2016" name="EMBO Rep.">
        <title>Folliculin directs the formation of a Rab34-RILP complex to control the nutrient-dependent dynamic distribution of lysosomes.</title>
        <authorList>
            <person name="Starling G.P."/>
            <person name="Yip Y.Y."/>
            <person name="Sanger A."/>
            <person name="Morton P.E."/>
            <person name="Eden E.R."/>
            <person name="Dodding M.P."/>
        </authorList>
    </citation>
    <scope>FUNCTION</scope>
    <scope>INTERACTION WITH RILP</scope>
</reference>
<reference key="16">
    <citation type="journal article" date="2022" name="Nat. Commun.">
        <title>Rep15 interacts with several Rab GTPases and has a distinct fold for a Rab effector.</title>
        <authorList>
            <person name="Rai A."/>
            <person name="Singh A.K."/>
            <person name="Bleimling N."/>
            <person name="Posern G."/>
            <person name="Vetter I.R."/>
            <person name="Goody R.S."/>
        </authorList>
    </citation>
    <scope>INTERACTION WITH REP15</scope>
</reference>
<reference key="17">
    <citation type="journal article" date="2023" name="Hum. Mol. Genet.">
        <title>Pathogenic RAB34 variants impair primary cilium assembly and cause a novel oral-facial-digital syndrome.</title>
        <authorList>
            <person name="Bruel A.L."/>
            <person name="Ganga A.K."/>
            <person name="Noskova L."/>
            <person name="Valenzuela I."/>
            <person name="Martinovic J."/>
            <person name="Duffourd Y."/>
            <person name="Zikanova M."/>
            <person name="Majer F."/>
            <person name="Kmoch S."/>
            <person name="Mohler M."/>
            <person name="Sun J."/>
            <person name="Sweeney L.K."/>
            <person name="Martinez-Gil N."/>
            <person name="Thauvin-Robinet C."/>
            <person name="Breslow D.K."/>
        </authorList>
    </citation>
    <scope>VARIANTS OFD20 VAL-202; HIS-211 AND LYS-218</scope>
    <scope>INVOLVEMENT IN OFD20</scope>
    <scope>CHARACTERIZATION OF VARIANTS OFD20 VAL-202 AND HIS-211</scope>
    <scope>FUNCTION</scope>
    <scope>SUBCELLULAR LOCATION</scope>
</reference>
<reference key="18">
    <citation type="journal article" date="2024" name="Clin. Genet.">
        <title>Compound heterozygous variants in RAB34 in a rare skeletal ciliopathy syndrome.</title>
        <authorList>
            <person name="Batkovskyte D."/>
            <person name="Komatsu M."/>
            <person name="Hammarsjoe A."/>
            <person name="Pooh R."/>
            <person name="Shimokawa O."/>
            <person name="Ikegawa S."/>
            <person name="Grigelioniene G."/>
            <person name="Nishimura G."/>
            <person name="Yamada T."/>
        </authorList>
    </citation>
    <scope>VARIANTS OFD20 THR-85 AND 231-ARG--PRO-259 DEL</scope>
    <scope>INVOLVEMENT IN OFD20</scope>
</reference>
<keyword id="KW-0007">Acetylation</keyword>
<keyword id="KW-0025">Alternative splicing</keyword>
<keyword id="KW-0966">Cell projection</keyword>
<keyword id="KW-1186">Ciliopathy</keyword>
<keyword id="KW-0970">Cilium biogenesis/degradation</keyword>
<keyword id="KW-0963">Cytoplasm</keyword>
<keyword id="KW-0968">Cytoplasmic vesicle</keyword>
<keyword id="KW-0206">Cytoskeleton</keyword>
<keyword id="KW-0225">Disease variant</keyword>
<keyword id="KW-0333">Golgi apparatus</keyword>
<keyword id="KW-0342">GTP-binding</keyword>
<keyword id="KW-0378">Hydrolase</keyword>
<keyword id="KW-0449">Lipoprotein</keyword>
<keyword id="KW-0460">Magnesium</keyword>
<keyword id="KW-0472">Membrane</keyword>
<keyword id="KW-0479">Metal-binding</keyword>
<keyword id="KW-0547">Nucleotide-binding</keyword>
<keyword id="KW-0597">Phosphoprotein</keyword>
<keyword id="KW-0636">Prenylation</keyword>
<keyword id="KW-0653">Protein transport</keyword>
<keyword id="KW-1267">Proteomics identification</keyword>
<keyword id="KW-1185">Reference proteome</keyword>
<keyword id="KW-0813">Transport</keyword>
<accession>Q9BZG1</accession>
<accession>B4E3A0</accession>
<accession>E9PEJ9</accession>
<accession>Q5BJE6</accession>
<accession>Q8NCJ8</accession>
<accession>Q96AR4</accession>
<evidence type="ECO:0000250" key="1">
    <source>
        <dbReference type="UniProtKB" id="P20340"/>
    </source>
</evidence>
<evidence type="ECO:0000250" key="2">
    <source>
        <dbReference type="UniProtKB" id="Q64008"/>
    </source>
</evidence>
<evidence type="ECO:0000255" key="3"/>
<evidence type="ECO:0000269" key="4">
    <source>
    </source>
</evidence>
<evidence type="ECO:0000269" key="5">
    <source>
    </source>
</evidence>
<evidence type="ECO:0000269" key="6">
    <source>
    </source>
</evidence>
<evidence type="ECO:0000269" key="7">
    <source>
    </source>
</evidence>
<evidence type="ECO:0000269" key="8">
    <source>
    </source>
</evidence>
<evidence type="ECO:0000269" key="9">
    <source>
    </source>
</evidence>
<evidence type="ECO:0000303" key="10">
    <source>
    </source>
</evidence>
<evidence type="ECO:0000303" key="11">
    <source>
    </source>
</evidence>
<evidence type="ECO:0000303" key="12">
    <source ref="3"/>
</evidence>
<evidence type="ECO:0000305" key="13"/>
<evidence type="ECO:0000312" key="14">
    <source>
        <dbReference type="HGNC" id="HGNC:16519"/>
    </source>
</evidence>
<evidence type="ECO:0007744" key="15">
    <source>
    </source>
</evidence>
<evidence type="ECO:0007744" key="16">
    <source>
    </source>
</evidence>
<evidence type="ECO:0007744" key="17">
    <source>
    </source>
</evidence>
<evidence type="ECO:0007744" key="18">
    <source>
    </source>
</evidence>
<evidence type="ECO:0007744" key="19">
    <source>
    </source>
</evidence>
<feature type="chain" id="PRO_0000121243" description="Ras-related protein Rab-34">
    <location>
        <begin position="1"/>
        <end position="259"/>
    </location>
</feature>
<feature type="short sequence motif" description="Switch 1" evidence="1">
    <location>
        <begin position="71"/>
        <end position="89"/>
    </location>
</feature>
<feature type="short sequence motif" description="Switch 2" evidence="1">
    <location>
        <begin position="108"/>
        <end position="127"/>
    </location>
</feature>
<feature type="binding site" evidence="1">
    <location>
        <position position="62"/>
    </location>
    <ligand>
        <name>GTP</name>
        <dbReference type="ChEBI" id="CHEBI:37565"/>
    </ligand>
</feature>
<feature type="binding site" evidence="1">
    <location>
        <position position="63"/>
    </location>
    <ligand>
        <name>GTP</name>
        <dbReference type="ChEBI" id="CHEBI:37565"/>
    </ligand>
</feature>
<feature type="binding site" evidence="1">
    <location>
        <position position="64"/>
    </location>
    <ligand>
        <name>GTP</name>
        <dbReference type="ChEBI" id="CHEBI:37565"/>
    </ligand>
</feature>
<feature type="binding site" evidence="1">
    <location>
        <position position="65"/>
    </location>
    <ligand>
        <name>GTP</name>
        <dbReference type="ChEBI" id="CHEBI:37565"/>
    </ligand>
</feature>
<feature type="binding site" evidence="1">
    <location>
        <position position="66"/>
    </location>
    <ligand>
        <name>GTP</name>
        <dbReference type="ChEBI" id="CHEBI:37565"/>
    </ligand>
</feature>
<feature type="binding site" evidence="1">
    <location>
        <position position="66"/>
    </location>
    <ligand>
        <name>Mg(2+)</name>
        <dbReference type="ChEBI" id="CHEBI:18420"/>
    </ligand>
</feature>
<feature type="binding site" evidence="1">
    <location>
        <position position="78"/>
    </location>
    <ligand>
        <name>GTP</name>
        <dbReference type="ChEBI" id="CHEBI:37565"/>
    </ligand>
</feature>
<feature type="binding site" evidence="1">
    <location>
        <position position="81"/>
    </location>
    <ligand>
        <name>GTP</name>
        <dbReference type="ChEBI" id="CHEBI:37565"/>
    </ligand>
</feature>
<feature type="binding site" evidence="1">
    <location>
        <position position="84"/>
    </location>
    <ligand>
        <name>GTP</name>
        <dbReference type="ChEBI" id="CHEBI:37565"/>
    </ligand>
</feature>
<feature type="binding site" evidence="1">
    <location>
        <position position="84"/>
    </location>
    <ligand>
        <name>Mg(2+)</name>
        <dbReference type="ChEBI" id="CHEBI:18420"/>
    </ligand>
</feature>
<feature type="binding site" evidence="1">
    <location>
        <position position="107"/>
    </location>
    <ligand>
        <name>Mg(2+)</name>
        <dbReference type="ChEBI" id="CHEBI:18420"/>
    </ligand>
</feature>
<feature type="binding site" evidence="1">
    <location>
        <position position="110"/>
    </location>
    <ligand>
        <name>GTP</name>
        <dbReference type="ChEBI" id="CHEBI:37565"/>
    </ligand>
</feature>
<feature type="binding site" evidence="1">
    <location>
        <position position="167"/>
    </location>
    <ligand>
        <name>GTP</name>
        <dbReference type="ChEBI" id="CHEBI:37565"/>
    </ligand>
</feature>
<feature type="binding site" evidence="1">
    <location>
        <position position="169"/>
    </location>
    <ligand>
        <name>GTP</name>
        <dbReference type="ChEBI" id="CHEBI:37565"/>
    </ligand>
</feature>
<feature type="binding site" evidence="1">
    <location>
        <position position="198"/>
    </location>
    <ligand>
        <name>GTP</name>
        <dbReference type="ChEBI" id="CHEBI:37565"/>
    </ligand>
</feature>
<feature type="modified residue" description="N-acetylmethionine" evidence="17 18">
    <location>
        <position position="1"/>
    </location>
</feature>
<feature type="modified residue" description="Phosphoserine" evidence="15 16">
    <location>
        <position position="241"/>
    </location>
</feature>
<feature type="modified residue" description="Phosphoserine" evidence="16 19">
    <location>
        <position position="244"/>
    </location>
</feature>
<feature type="lipid moiety-binding region" description="S-geranylgeranyl cysteine" evidence="3">
    <location>
        <position position="257"/>
    </location>
</feature>
<feature type="lipid moiety-binding region" description="S-geranylgeranyl cysteine" evidence="3">
    <location>
        <position position="258"/>
    </location>
</feature>
<feature type="splice variant" id="VSP_044734" description="In isoform 4." evidence="10">
    <location>
        <begin position="51"/>
        <end position="72"/>
    </location>
</feature>
<feature type="splice variant" id="VSP_010142" description="In isoform 2." evidence="11 12">
    <location>
        <begin position="164"/>
        <end position="171"/>
    </location>
</feature>
<feature type="sequence variant" id="VAR_089363" description="In OFD20; likely pathogenic." evidence="9">
    <original>I</original>
    <variation>T</variation>
    <location>
        <position position="85"/>
    </location>
</feature>
<feature type="sequence variant" id="VAR_015097" description="In dbSNP:rs12125.">
    <original>V</original>
    <variation>L</variation>
    <location>
        <position position="197"/>
    </location>
</feature>
<feature type="sequence variant" id="VAR_088676" description="In OFD20; likely pathogenic; due to a nucleotide substitution that also affects splicing; patient cells contain both normally spliced transcripts with variant V-202 and aberrant transcripts; severely decreased function in ciliogenesis; does not fully rescue cilia formation when expressed in RAB34-null retinal epithelium cells; no effect on localization to centrioles." evidence="8">
    <original>G</original>
    <variation>V</variation>
    <location>
        <position position="202"/>
    </location>
</feature>
<feature type="sequence variant" id="VAR_088677" description="In OFD20; likely pathogenic; severely decreased function in ciliogenesis; does not fully rescue cilia formation when expressed in RAB34-null rethinal epithelium cells; no effect on localization to centrioles." evidence="8">
    <original>R</original>
    <variation>H</variation>
    <location>
        <position position="211"/>
    </location>
</feature>
<feature type="sequence variant" id="VAR_088678" description="In OFD20; uncertain significance." evidence="8">
    <original>E</original>
    <variation>K</variation>
    <location>
        <position position="218"/>
    </location>
</feature>
<feature type="sequence variant" id="VAR_089364" description="In OFD20; likely pathogenic." evidence="9">
    <location>
        <begin position="231"/>
        <end position="259"/>
    </location>
</feature>
<feature type="sequence conflict" description="In Ref. 4; BAG65412." evidence="13" ref="4">
    <original>D</original>
    <variation>Y</variation>
    <location>
        <position position="10"/>
    </location>
</feature>
<feature type="sequence conflict" description="In Ref. 4; BAC11141." evidence="13" ref="4">
    <original>V</original>
    <variation>I</variation>
    <location>
        <position position="55"/>
    </location>
</feature>
<sequence>MNILAPVRRDRVLAELPQCLRKEAALHGHKDFHPRVTCACQEHRTGTVGFKISKVIVVGDLSVGKTCLINRFCKDTFDKNYKATIGVDFEMERFEVLGIPFSLQLWDTAGQERFKCIASTYYRGAQAIIIVFNLNDVASLEHTKQWLADALKENDPSSVLLFLVGSKKDLSTPAQYALMEKDALQVAQEMKAEYWAVSSLTGENVREFFFRVAALTFEANVLAELEKSGARRIGDVVRINSDDSNLYLTASKKKPTCCP</sequence>